<protein>
    <recommendedName>
        <fullName>Uncharacterized 5.9 kDa protein</fullName>
    </recommendedName>
</protein>
<accession>P19306</accession>
<feature type="chain" id="PRO_0000222988" description="Uncharacterized 5.9 kDa protein">
    <location>
        <begin position="1"/>
        <end position="52"/>
    </location>
</feature>
<dbReference type="EMBL" id="X14855">
    <property type="protein sequence ID" value="CAA33003.1"/>
    <property type="molecule type" value="Genomic_DNA"/>
</dbReference>
<dbReference type="EMBL" id="X14717">
    <property type="protein sequence ID" value="CAA32839.1"/>
    <property type="molecule type" value="Genomic_DNA"/>
</dbReference>
<dbReference type="PIR" id="S15922">
    <property type="entry name" value="S15922"/>
</dbReference>
<dbReference type="Proteomes" id="UP000009250">
    <property type="component" value="Genome"/>
</dbReference>
<reference key="1">
    <citation type="journal article" date="1990" name="Nucleic Acids Res.">
        <title>Nucleotide sequence of the viral protein TPX of the TTV1 variant VT3.</title>
        <authorList>
            <person name="Neumann H."/>
            <person name="Zillig W."/>
        </authorList>
    </citation>
    <scope>NUCLEOTIDE SEQUENCE [GENOMIC DNA]</scope>
</reference>
<sequence length="52" mass="5903">MFEPCLYTFTFAVLPFIDKYITNGSVNAANCDISISFTTEYVPDIFCSMLTF</sequence>
<keyword id="KW-1185">Reference proteome</keyword>
<proteinExistence type="predicted"/>
<name>YORV_TTV1K</name>
<organismHost>
    <name type="scientific">Thermoproteus tenax</name>
    <dbReference type="NCBI Taxonomy" id="2271"/>
</organismHost>
<organism>
    <name type="scientific">Thermoproteus tenax virus 1 (strain KRA1)</name>
    <name type="common">TTV1</name>
    <dbReference type="NCBI Taxonomy" id="10480"/>
    <lineage>
        <taxon>Viruses</taxon>
        <taxon>Adnaviria</taxon>
        <taxon>Zilligvirae</taxon>
        <taxon>Taleaviricota</taxon>
        <taxon>Tokiviricetes</taxon>
        <taxon>Primavirales</taxon>
        <taxon>Tristromaviridae</taxon>
        <taxon>Betatristromavirus</taxon>
        <taxon>Betatristromavirus TTV1</taxon>
    </lineage>
</organism>